<sequence length="96" mass="10789">MPGKIAVEVAYALPEKQYLQRVTLQEGATVEEAIRASGLLELRTDIDLTKNKVGIYSRPAKLSDSVHDGDRVEIYRPLIADPKELRRQRAEKSANK</sequence>
<evidence type="ECO:0000255" key="1">
    <source>
        <dbReference type="HAMAP-Rule" id="MF_00460"/>
    </source>
</evidence>
<gene>
    <name evidence="1" type="primary">rnfH</name>
    <name type="ordered locus">ECSE_2901</name>
</gene>
<reference key="1">
    <citation type="journal article" date="2008" name="DNA Res.">
        <title>Complete genome sequence and comparative analysis of the wild-type commensal Escherichia coli strain SE11 isolated from a healthy adult.</title>
        <authorList>
            <person name="Oshima K."/>
            <person name="Toh H."/>
            <person name="Ogura Y."/>
            <person name="Sasamoto H."/>
            <person name="Morita H."/>
            <person name="Park S.-H."/>
            <person name="Ooka T."/>
            <person name="Iyoda S."/>
            <person name="Taylor T.D."/>
            <person name="Hayashi T."/>
            <person name="Itoh K."/>
            <person name="Hattori M."/>
        </authorList>
    </citation>
    <scope>NUCLEOTIDE SEQUENCE [LARGE SCALE GENOMIC DNA]</scope>
    <source>
        <strain>SE11</strain>
    </source>
</reference>
<protein>
    <recommendedName>
        <fullName evidence="1">Protein RnfH</fullName>
    </recommendedName>
</protein>
<accession>B6I639</accession>
<comment type="similarity">
    <text evidence="1">Belongs to the UPF0125 (RnfH) family.</text>
</comment>
<organism>
    <name type="scientific">Escherichia coli (strain SE11)</name>
    <dbReference type="NCBI Taxonomy" id="409438"/>
    <lineage>
        <taxon>Bacteria</taxon>
        <taxon>Pseudomonadati</taxon>
        <taxon>Pseudomonadota</taxon>
        <taxon>Gammaproteobacteria</taxon>
        <taxon>Enterobacterales</taxon>
        <taxon>Enterobacteriaceae</taxon>
        <taxon>Escherichia</taxon>
    </lineage>
</organism>
<feature type="chain" id="PRO_1000200175" description="Protein RnfH">
    <location>
        <begin position="1"/>
        <end position="96"/>
    </location>
</feature>
<dbReference type="EMBL" id="AP009240">
    <property type="protein sequence ID" value="BAG78425.1"/>
    <property type="molecule type" value="Genomic_DNA"/>
</dbReference>
<dbReference type="RefSeq" id="WP_001117838.1">
    <property type="nucleotide sequence ID" value="NC_011415.1"/>
</dbReference>
<dbReference type="SMR" id="B6I639"/>
<dbReference type="KEGG" id="ecy:ECSE_2901"/>
<dbReference type="HOGENOM" id="CLU_150721_1_0_6"/>
<dbReference type="Proteomes" id="UP000008199">
    <property type="component" value="Chromosome"/>
</dbReference>
<dbReference type="Gene3D" id="3.10.20.280">
    <property type="entry name" value="RnfH-like"/>
    <property type="match status" value="1"/>
</dbReference>
<dbReference type="HAMAP" id="MF_00460">
    <property type="entry name" value="UPF0125_RnfH"/>
    <property type="match status" value="1"/>
</dbReference>
<dbReference type="InterPro" id="IPR016155">
    <property type="entry name" value="Mopterin_synth/thiamin_S_b"/>
</dbReference>
<dbReference type="InterPro" id="IPR005346">
    <property type="entry name" value="RnfH"/>
</dbReference>
<dbReference type="InterPro" id="IPR037021">
    <property type="entry name" value="RnfH_sf"/>
</dbReference>
<dbReference type="NCBIfam" id="NF002490">
    <property type="entry name" value="PRK01777.1"/>
    <property type="match status" value="1"/>
</dbReference>
<dbReference type="PANTHER" id="PTHR37483">
    <property type="entry name" value="UPF0125 PROTEIN RATB"/>
    <property type="match status" value="1"/>
</dbReference>
<dbReference type="PANTHER" id="PTHR37483:SF1">
    <property type="entry name" value="UPF0125 PROTEIN RATB"/>
    <property type="match status" value="1"/>
</dbReference>
<dbReference type="Pfam" id="PF03658">
    <property type="entry name" value="Ub-RnfH"/>
    <property type="match status" value="1"/>
</dbReference>
<dbReference type="SUPFAM" id="SSF54285">
    <property type="entry name" value="MoaD/ThiS"/>
    <property type="match status" value="1"/>
</dbReference>
<proteinExistence type="inferred from homology"/>
<name>RNFH_ECOSE</name>